<dbReference type="EC" id="7.1.1.-" evidence="1"/>
<dbReference type="EMBL" id="AP009372">
    <property type="protein sequence ID" value="BAF50345.1"/>
    <property type="molecule type" value="Genomic_DNA"/>
</dbReference>
<dbReference type="RefSeq" id="YP_001123520.1">
    <property type="nucleotide sequence ID" value="NC_009271.1"/>
</dbReference>
<dbReference type="SMR" id="A4QKZ0"/>
<dbReference type="GeneID" id="4962640"/>
<dbReference type="GO" id="GO:0009535">
    <property type="term" value="C:chloroplast thylakoid membrane"/>
    <property type="evidence" value="ECO:0007669"/>
    <property type="project" value="UniProtKB-SubCell"/>
</dbReference>
<dbReference type="GO" id="GO:0051287">
    <property type="term" value="F:NAD binding"/>
    <property type="evidence" value="ECO:0007669"/>
    <property type="project" value="InterPro"/>
</dbReference>
<dbReference type="GO" id="GO:0016655">
    <property type="term" value="F:oxidoreductase activity, acting on NAD(P)H, quinone or similar compound as acceptor"/>
    <property type="evidence" value="ECO:0007669"/>
    <property type="project" value="UniProtKB-UniRule"/>
</dbReference>
<dbReference type="GO" id="GO:0048038">
    <property type="term" value="F:quinone binding"/>
    <property type="evidence" value="ECO:0007669"/>
    <property type="project" value="UniProtKB-KW"/>
</dbReference>
<dbReference type="GO" id="GO:0019684">
    <property type="term" value="P:photosynthesis, light reaction"/>
    <property type="evidence" value="ECO:0007669"/>
    <property type="project" value="UniProtKB-UniRule"/>
</dbReference>
<dbReference type="FunFam" id="1.10.645.10:FF:000003">
    <property type="entry name" value="NAD(P)H-quinone oxidoreductase subunit H, chloroplastic"/>
    <property type="match status" value="1"/>
</dbReference>
<dbReference type="Gene3D" id="1.10.645.10">
    <property type="entry name" value="Cytochrome-c3 Hydrogenase, chain B"/>
    <property type="match status" value="1"/>
</dbReference>
<dbReference type="HAMAP" id="MF_01358">
    <property type="entry name" value="NDH1_NuoD"/>
    <property type="match status" value="1"/>
</dbReference>
<dbReference type="InterPro" id="IPR001135">
    <property type="entry name" value="NADH_Q_OxRdtase_suD"/>
</dbReference>
<dbReference type="InterPro" id="IPR014029">
    <property type="entry name" value="NADH_UbQ_OxRdtase_49kDa_CS"/>
</dbReference>
<dbReference type="InterPro" id="IPR022885">
    <property type="entry name" value="NDH1_su_D/H"/>
</dbReference>
<dbReference type="InterPro" id="IPR029014">
    <property type="entry name" value="NiFe-Hase_large"/>
</dbReference>
<dbReference type="NCBIfam" id="NF004739">
    <property type="entry name" value="PRK06075.1"/>
    <property type="match status" value="1"/>
</dbReference>
<dbReference type="NCBIfam" id="NF005649">
    <property type="entry name" value="PRK07415.1"/>
    <property type="match status" value="1"/>
</dbReference>
<dbReference type="PANTHER" id="PTHR11993:SF10">
    <property type="entry name" value="NADH DEHYDROGENASE [UBIQUINONE] IRON-SULFUR PROTEIN 2, MITOCHONDRIAL"/>
    <property type="match status" value="1"/>
</dbReference>
<dbReference type="PANTHER" id="PTHR11993">
    <property type="entry name" value="NADH-UBIQUINONE OXIDOREDUCTASE 49 KDA SUBUNIT"/>
    <property type="match status" value="1"/>
</dbReference>
<dbReference type="Pfam" id="PF00346">
    <property type="entry name" value="Complex1_49kDa"/>
    <property type="match status" value="1"/>
</dbReference>
<dbReference type="SUPFAM" id="SSF56762">
    <property type="entry name" value="HydB/Nqo4-like"/>
    <property type="match status" value="1"/>
</dbReference>
<dbReference type="PROSITE" id="PS00535">
    <property type="entry name" value="COMPLEX1_49K"/>
    <property type="match status" value="1"/>
</dbReference>
<protein>
    <recommendedName>
        <fullName evidence="1">NAD(P)H-quinone oxidoreductase subunit H, chloroplastic</fullName>
        <ecNumber evidence="1">7.1.1.-</ecNumber>
    </recommendedName>
    <alternativeName>
        <fullName>NAD(P)H dehydrogenase subunit H</fullName>
    </alternativeName>
    <alternativeName>
        <fullName evidence="1">NADH-plastoquinone oxidoreductase 49 kDa subunit</fullName>
    </alternativeName>
    <alternativeName>
        <fullName evidence="1">NADH-plastoquinone oxidoreductase subunit H</fullName>
    </alternativeName>
</protein>
<accession>A4QKZ0</accession>
<feature type="chain" id="PRO_0000357980" description="NAD(P)H-quinone oxidoreductase subunit H, chloroplastic">
    <location>
        <begin position="1"/>
        <end position="393"/>
    </location>
</feature>
<gene>
    <name evidence="1" type="primary">ndhH</name>
</gene>
<comment type="function">
    <text evidence="1">NDH shuttles electrons from NAD(P)H:plastoquinone, via FMN and iron-sulfur (Fe-S) centers, to quinones in the photosynthetic chain and possibly in a chloroplast respiratory chain. The immediate electron acceptor for the enzyme in this species is believed to be plastoquinone. Couples the redox reaction to proton translocation, and thus conserves the redox energy in a proton gradient.</text>
</comment>
<comment type="catalytic activity">
    <reaction evidence="1">
        <text>a plastoquinone + NADH + (n+1) H(+)(in) = a plastoquinol + NAD(+) + n H(+)(out)</text>
        <dbReference type="Rhea" id="RHEA:42608"/>
        <dbReference type="Rhea" id="RHEA-COMP:9561"/>
        <dbReference type="Rhea" id="RHEA-COMP:9562"/>
        <dbReference type="ChEBI" id="CHEBI:15378"/>
        <dbReference type="ChEBI" id="CHEBI:17757"/>
        <dbReference type="ChEBI" id="CHEBI:57540"/>
        <dbReference type="ChEBI" id="CHEBI:57945"/>
        <dbReference type="ChEBI" id="CHEBI:62192"/>
    </reaction>
</comment>
<comment type="catalytic activity">
    <reaction evidence="1">
        <text>a plastoquinone + NADPH + (n+1) H(+)(in) = a plastoquinol + NADP(+) + n H(+)(out)</text>
        <dbReference type="Rhea" id="RHEA:42612"/>
        <dbReference type="Rhea" id="RHEA-COMP:9561"/>
        <dbReference type="Rhea" id="RHEA-COMP:9562"/>
        <dbReference type="ChEBI" id="CHEBI:15378"/>
        <dbReference type="ChEBI" id="CHEBI:17757"/>
        <dbReference type="ChEBI" id="CHEBI:57783"/>
        <dbReference type="ChEBI" id="CHEBI:58349"/>
        <dbReference type="ChEBI" id="CHEBI:62192"/>
    </reaction>
</comment>
<comment type="subunit">
    <text evidence="1">NDH is composed of at least 16 different subunits, 5 of which are encoded in the nucleus.</text>
</comment>
<comment type="subcellular location">
    <subcellularLocation>
        <location evidence="1">Plastid</location>
        <location evidence="1">Chloroplast thylakoid membrane</location>
        <topology evidence="1">Peripheral membrane protein</topology>
        <orientation evidence="1">Stromal side</orientation>
    </subcellularLocation>
</comment>
<comment type="similarity">
    <text evidence="1">Belongs to the complex I 49 kDa subunit family.</text>
</comment>
<proteinExistence type="inferred from homology"/>
<organism>
    <name type="scientific">Crucihimalaya wallichii</name>
    <name type="common">Rock-cress</name>
    <name type="synonym">Arabidopsis campestris</name>
    <dbReference type="NCBI Taxonomy" id="78192"/>
    <lineage>
        <taxon>Eukaryota</taxon>
        <taxon>Viridiplantae</taxon>
        <taxon>Streptophyta</taxon>
        <taxon>Embryophyta</taxon>
        <taxon>Tracheophyta</taxon>
        <taxon>Spermatophyta</taxon>
        <taxon>Magnoliopsida</taxon>
        <taxon>eudicotyledons</taxon>
        <taxon>Gunneridae</taxon>
        <taxon>Pentapetalae</taxon>
        <taxon>rosids</taxon>
        <taxon>malvids</taxon>
        <taxon>Brassicales</taxon>
        <taxon>Brassicaceae</taxon>
        <taxon>Crucihimalayeae</taxon>
        <taxon>Crucihimalaya</taxon>
    </lineage>
</organism>
<geneLocation type="chloroplast"/>
<evidence type="ECO:0000255" key="1">
    <source>
        <dbReference type="HAMAP-Rule" id="MF_01358"/>
    </source>
</evidence>
<reference key="1">
    <citation type="submission" date="2007-03" db="EMBL/GenBank/DDBJ databases">
        <title>Sequencing analysis of Crucihimalaya wallichii chloroplast DNA.</title>
        <authorList>
            <person name="Hosouchi T."/>
            <person name="Tsuruoka H."/>
            <person name="Kotani H."/>
        </authorList>
    </citation>
    <scope>NUCLEOTIDE SEQUENCE [LARGE SCALE GENOMIC DNA]</scope>
</reference>
<name>NDHH_CRUWA</name>
<keyword id="KW-0150">Chloroplast</keyword>
<keyword id="KW-0472">Membrane</keyword>
<keyword id="KW-0520">NAD</keyword>
<keyword id="KW-0521">NADP</keyword>
<keyword id="KW-0934">Plastid</keyword>
<keyword id="KW-0618">Plastoquinone</keyword>
<keyword id="KW-0874">Quinone</keyword>
<keyword id="KW-0793">Thylakoid</keyword>
<keyword id="KW-1278">Translocase</keyword>
<keyword id="KW-0813">Transport</keyword>
<sequence length="393" mass="45517">MKRPVTGKDLMIVNMGPHHPSMHGVLRLIVTLDGEDVVDCEPILGYLHRGMEKIAENRAIIQYLPYVTRWDYLATMFTEAITVNGPEQLGNIQVPKRASYIRVIMLELSRIASHLLWLGPFMADIGAQTPFFYIFREREFIYDLFEAATGMRMMHNFFRIGGIAADLPYGWIDKCLDFCDYFLTEVVEYQKLITRNPIFLERVEGVGIIGGEEAINWGLSGPMLRASGIPWDLRKVDRYESYDEFEWEIQWQKQGDSLARYLVRLSEMTESIKIIQQALEGLPGGPYENLESRGFERKRNPEWNDFEYRFISKKPSPTFELSKQELYVRVEAPKGELGIFLIGDQSGFPWRWKIRPPGFINLQILPELVKRMKLADIMTILGSIDIIMGEVDR</sequence>